<feature type="chain" id="PRO_0000452627" description="MFS-type transporter clz4">
    <location>
        <begin position="1"/>
        <end position="557"/>
    </location>
</feature>
<feature type="transmembrane region" description="Helical" evidence="1">
    <location>
        <begin position="22"/>
        <end position="42"/>
    </location>
</feature>
<feature type="transmembrane region" description="Helical" evidence="1">
    <location>
        <begin position="59"/>
        <end position="79"/>
    </location>
</feature>
<feature type="transmembrane region" description="Helical" evidence="1">
    <location>
        <begin position="89"/>
        <end position="109"/>
    </location>
</feature>
<feature type="transmembrane region" description="Helical" evidence="1">
    <location>
        <begin position="120"/>
        <end position="140"/>
    </location>
</feature>
<feature type="transmembrane region" description="Helical" evidence="1">
    <location>
        <begin position="150"/>
        <end position="170"/>
    </location>
</feature>
<feature type="transmembrane region" description="Helical" evidence="1">
    <location>
        <begin position="179"/>
        <end position="199"/>
    </location>
</feature>
<feature type="transmembrane region" description="Helical" evidence="1">
    <location>
        <begin position="217"/>
        <end position="237"/>
    </location>
</feature>
<feature type="transmembrane region" description="Helical" evidence="1">
    <location>
        <begin position="245"/>
        <end position="265"/>
    </location>
</feature>
<feature type="transmembrane region" description="Helical" evidence="1">
    <location>
        <begin position="269"/>
        <end position="289"/>
    </location>
</feature>
<feature type="transmembrane region" description="Helical" evidence="1">
    <location>
        <begin position="319"/>
        <end position="339"/>
    </location>
</feature>
<feature type="transmembrane region" description="Helical" evidence="1">
    <location>
        <begin position="346"/>
        <end position="366"/>
    </location>
</feature>
<feature type="transmembrane region" description="Helical" evidence="1">
    <location>
        <begin position="379"/>
        <end position="399"/>
    </location>
</feature>
<feature type="transmembrane region" description="Helical" evidence="1">
    <location>
        <begin position="419"/>
        <end position="439"/>
    </location>
</feature>
<feature type="transmembrane region" description="Helical" evidence="1">
    <location>
        <begin position="479"/>
        <end position="499"/>
    </location>
</feature>
<feature type="region of interest" description="Disordered" evidence="2">
    <location>
        <begin position="505"/>
        <end position="557"/>
    </location>
</feature>
<feature type="compositionally biased region" description="Basic and acidic residues" evidence="2">
    <location>
        <begin position="505"/>
        <end position="523"/>
    </location>
</feature>
<gene>
    <name evidence="3" type="primary">clz4</name>
</gene>
<accession>A0A345BJP3</accession>
<evidence type="ECO:0000255" key="1"/>
<evidence type="ECO:0000256" key="2">
    <source>
        <dbReference type="SAM" id="MobiDB-lite"/>
    </source>
</evidence>
<evidence type="ECO:0000303" key="3">
    <source>
    </source>
</evidence>
<evidence type="ECO:0000305" key="4"/>
<evidence type="ECO:0000305" key="5">
    <source>
    </source>
</evidence>
<reference key="1">
    <citation type="journal article" date="2017" name="Org. Lett.">
        <title>Identification and heterologous production of a benzoyl-primed tricarboxylic acid polyketide intermediate from the zaragozic acid A biosynthetic pathway.</title>
        <authorList>
            <person name="Liu N."/>
            <person name="Hung Y.S."/>
            <person name="Gao S.S."/>
            <person name="Hang L."/>
            <person name="Zou Y."/>
            <person name="Chooi Y.H."/>
            <person name="Tang Y."/>
        </authorList>
    </citation>
    <scope>NUCLEOTIDE SEQUENCE [GENOMIC DNA]</scope>
    <scope>FUNCTION</scope>
    <source>
        <strain>ATCC 74067</strain>
    </source>
</reference>
<keyword id="KW-0472">Membrane</keyword>
<keyword id="KW-0812">Transmembrane</keyword>
<keyword id="KW-1133">Transmembrane helix</keyword>
<keyword id="KW-0813">Transport</keyword>
<name>CLZ4_COCLU</name>
<dbReference type="EMBL" id="MF806533">
    <property type="protein sequence ID" value="AXF50656.1"/>
    <property type="molecule type" value="Genomic_DNA"/>
</dbReference>
<dbReference type="SMR" id="A0A345BJP3"/>
<dbReference type="GO" id="GO:0005886">
    <property type="term" value="C:plasma membrane"/>
    <property type="evidence" value="ECO:0007669"/>
    <property type="project" value="TreeGrafter"/>
</dbReference>
<dbReference type="GO" id="GO:0022857">
    <property type="term" value="F:transmembrane transporter activity"/>
    <property type="evidence" value="ECO:0007669"/>
    <property type="project" value="InterPro"/>
</dbReference>
<dbReference type="Gene3D" id="1.20.1250.20">
    <property type="entry name" value="MFS general substrate transporter like domains"/>
    <property type="match status" value="1"/>
</dbReference>
<dbReference type="Gene3D" id="1.20.1720.10">
    <property type="entry name" value="Multidrug resistance protein D"/>
    <property type="match status" value="1"/>
</dbReference>
<dbReference type="InterPro" id="IPR011701">
    <property type="entry name" value="MFS"/>
</dbReference>
<dbReference type="InterPro" id="IPR020846">
    <property type="entry name" value="MFS_dom"/>
</dbReference>
<dbReference type="InterPro" id="IPR036259">
    <property type="entry name" value="MFS_trans_sf"/>
</dbReference>
<dbReference type="PANTHER" id="PTHR23501">
    <property type="entry name" value="MAJOR FACILITATOR SUPERFAMILY"/>
    <property type="match status" value="1"/>
</dbReference>
<dbReference type="PANTHER" id="PTHR23501:SF78">
    <property type="entry name" value="MAJOR FACILITATOR SUPERFAMILY (MFS) PROFILE DOMAIN-CONTAINING PROTEIN-RELATED"/>
    <property type="match status" value="1"/>
</dbReference>
<dbReference type="Pfam" id="PF07690">
    <property type="entry name" value="MFS_1"/>
    <property type="match status" value="1"/>
</dbReference>
<dbReference type="SUPFAM" id="SSF103473">
    <property type="entry name" value="MFS general substrate transporter"/>
    <property type="match status" value="1"/>
</dbReference>
<dbReference type="PROSITE" id="PS50850">
    <property type="entry name" value="MFS"/>
    <property type="match status" value="1"/>
</dbReference>
<comment type="function">
    <text evidence="5">MFS-type transporter; part of the gene cluster that mediates the biosynthesis of squalestatin S1 (SQS1, also known as zaragozic acid A), a heavily oxidized fungal polyketide that offers potent cholesterol lowering activity by targeting squalene synthase (SS).</text>
</comment>
<comment type="subcellular location">
    <subcellularLocation>
        <location evidence="1">Membrane</location>
        <topology evidence="1">Multi-pass membrane protein</topology>
    </subcellularLocation>
</comment>
<comment type="similarity">
    <text evidence="4">Belongs to the major facilitator superfamily. TCR/Tet family.</text>
</comment>
<proteinExistence type="inferred from homology"/>
<protein>
    <recommendedName>
        <fullName evidence="3">MFS-type transporter clz4</fullName>
    </recommendedName>
    <alternativeName>
        <fullName evidence="3">Squalestatin S1 biosynthesis cluster protein clz4</fullName>
    </alternativeName>
    <alternativeName>
        <fullName evidence="3">Zaragozic acid A biosynthesis cluster protein 4</fullName>
    </alternativeName>
</protein>
<sequence length="557" mass="59837">MAHTKIPTALHEQENFLPKKKLIIVILTLGVVLFVINIDHNGLSTLLPTIAEDLGAQKSITWAGSSQLIATTVFSVLYGRLSDIFGRKALFVSALWVFSIAELGCGFATSPKMLYAMRALTGASGGGIGNLSIIIATDVVSLRHRGQYMAVVAPFMVLGNICGPLVAAGVAKSPLTWRGLFWLISPLGVLSAVLAGYILPSTTPTDTFKQNLVKVDWLGSFTSTIAIVGFMVAVSGPGAYHAGYSLLVISLLSVSGVAFLAFLFIEWKLATLPVIPLTIFAIPDVSALLMQTFTLGWVNQANVYFVPIYAQNLRQWSPVISGVLLFPIIAVQVVVSMIAGRWMSKSGQYGLTIRLGVALLLIGSLLETKFGRETHPAYVIIVLLVIGIGVGAANQPMVIAMQAHTKKSERAVVTSSRNFFRFLGSACGVVMSAAILQSTLRTSLPAAYKHLADSPYALAGLNPRERDAIAPAYERAIRHVYIASAAASVLCSLGLFVWKDDGYESRPTENNDDIEHAPARGIEREDEQSSLIYDREPSAVSYGTVEAGEPNRLRRGG</sequence>
<organism>
    <name type="scientific">Cochliobolus lunatus</name>
    <name type="common">Filamentous fungus</name>
    <name type="synonym">Curvularia lunata</name>
    <dbReference type="NCBI Taxonomy" id="5503"/>
    <lineage>
        <taxon>Eukaryota</taxon>
        <taxon>Fungi</taxon>
        <taxon>Dikarya</taxon>
        <taxon>Ascomycota</taxon>
        <taxon>Pezizomycotina</taxon>
        <taxon>Dothideomycetes</taxon>
        <taxon>Pleosporomycetidae</taxon>
        <taxon>Pleosporales</taxon>
        <taxon>Pleosporineae</taxon>
        <taxon>Pleosporaceae</taxon>
        <taxon>Curvularia</taxon>
    </lineage>
</organism>